<dbReference type="EMBL" id="DP000045">
    <property type="protein sequence ID" value="ABO52991.1"/>
    <property type="molecule type" value="Genomic_DNA"/>
</dbReference>
<dbReference type="RefSeq" id="NP_001162046.1">
    <property type="nucleotide sequence ID" value="NM_001168574.1"/>
</dbReference>
<dbReference type="SMR" id="P0C7A4"/>
<dbReference type="FunCoup" id="P0C7A4">
    <property type="interactions" value="188"/>
</dbReference>
<dbReference type="STRING" id="9601.ENSPPYP00000012344"/>
<dbReference type="Ensembl" id="ENSPPYT00000012826.2">
    <property type="protein sequence ID" value="ENSPPYP00000012344.1"/>
    <property type="gene ID" value="ENSPPYG00000032101.1"/>
</dbReference>
<dbReference type="GeneID" id="100137039"/>
<dbReference type="KEGG" id="pon:100137039"/>
<dbReference type="CTD" id="6407"/>
<dbReference type="eggNOG" id="ENOG502T80H">
    <property type="taxonomic scope" value="Eukaryota"/>
</dbReference>
<dbReference type="GeneTree" id="ENSGT00940000162560"/>
<dbReference type="HOGENOM" id="CLU_034710_0_0_1"/>
<dbReference type="InParanoid" id="P0C7A4"/>
<dbReference type="OMA" id="HGKSQNQ"/>
<dbReference type="OrthoDB" id="9482349at2759"/>
<dbReference type="TreeFam" id="TF342360"/>
<dbReference type="Proteomes" id="UP000001595">
    <property type="component" value="Chromosome 20"/>
</dbReference>
<dbReference type="GO" id="GO:0070062">
    <property type="term" value="C:extracellular exosome"/>
    <property type="evidence" value="ECO:0007669"/>
    <property type="project" value="TreeGrafter"/>
</dbReference>
<dbReference type="GO" id="GO:0002020">
    <property type="term" value="F:protease binding"/>
    <property type="evidence" value="ECO:0007669"/>
    <property type="project" value="Ensembl"/>
</dbReference>
<dbReference type="GO" id="GO:0008270">
    <property type="term" value="F:zinc ion binding"/>
    <property type="evidence" value="ECO:0007669"/>
    <property type="project" value="Ensembl"/>
</dbReference>
<dbReference type="GO" id="GO:0019731">
    <property type="term" value="P:antibacterial humoral response"/>
    <property type="evidence" value="ECO:0007669"/>
    <property type="project" value="Ensembl"/>
</dbReference>
<dbReference type="GO" id="GO:0050817">
    <property type="term" value="P:coagulation"/>
    <property type="evidence" value="ECO:0007669"/>
    <property type="project" value="Ensembl"/>
</dbReference>
<dbReference type="GO" id="GO:1901318">
    <property type="term" value="P:negative regulation of flagellated sperm motility"/>
    <property type="evidence" value="ECO:0007669"/>
    <property type="project" value="InterPro"/>
</dbReference>
<dbReference type="GO" id="GO:0048240">
    <property type="term" value="P:sperm capacitation"/>
    <property type="evidence" value="ECO:0007669"/>
    <property type="project" value="TreeGrafter"/>
</dbReference>
<dbReference type="InterPro" id="IPR008836">
    <property type="entry name" value="Semenogelin"/>
</dbReference>
<dbReference type="PANTHER" id="PTHR10547:SF6">
    <property type="entry name" value="SEMENOGELIN-2"/>
    <property type="match status" value="1"/>
</dbReference>
<dbReference type="PANTHER" id="PTHR10547">
    <property type="entry name" value="SEMENOGELIN/SEMINAL VESICLE SECRETORY PROTEIN"/>
    <property type="match status" value="1"/>
</dbReference>
<dbReference type="Pfam" id="PF05474">
    <property type="entry name" value="Semenogelin"/>
    <property type="match status" value="1"/>
</dbReference>
<evidence type="ECO:0000250" key="1"/>
<evidence type="ECO:0000255" key="2"/>
<evidence type="ECO:0000256" key="3">
    <source>
        <dbReference type="SAM" id="MobiDB-lite"/>
    </source>
</evidence>
<evidence type="ECO:0000305" key="4"/>
<protein>
    <recommendedName>
        <fullName>Semenogelin-2</fullName>
    </recommendedName>
    <alternativeName>
        <fullName>Semenogelin II</fullName>
        <shortName>SGII</shortName>
    </alternativeName>
</protein>
<organism>
    <name type="scientific">Pongo abelii</name>
    <name type="common">Sumatran orangutan</name>
    <name type="synonym">Pongo pygmaeus abelii</name>
    <dbReference type="NCBI Taxonomy" id="9601"/>
    <lineage>
        <taxon>Eukaryota</taxon>
        <taxon>Metazoa</taxon>
        <taxon>Chordata</taxon>
        <taxon>Craniata</taxon>
        <taxon>Vertebrata</taxon>
        <taxon>Euteleostomi</taxon>
        <taxon>Mammalia</taxon>
        <taxon>Eutheria</taxon>
        <taxon>Euarchontoglires</taxon>
        <taxon>Primates</taxon>
        <taxon>Haplorrhini</taxon>
        <taxon>Catarrhini</taxon>
        <taxon>Hominidae</taxon>
        <taxon>Pongo</taxon>
    </lineage>
</organism>
<proteinExistence type="inferred from homology"/>
<name>SEMG2_PONAB</name>
<keyword id="KW-1185">Reference proteome</keyword>
<keyword id="KW-0677">Repeat</keyword>
<keyword id="KW-0964">Secreted</keyword>
<keyword id="KW-0732">Signal</keyword>
<feature type="signal peptide" evidence="2">
    <location>
        <begin position="1"/>
        <end position="23"/>
    </location>
</feature>
<feature type="chain" id="PRO_0000329296" description="Semenogelin-2">
    <location>
        <begin position="24"/>
        <end position="581"/>
    </location>
</feature>
<feature type="region of interest" description="Disordered" evidence="3">
    <location>
        <begin position="24"/>
        <end position="62"/>
    </location>
</feature>
<feature type="region of interest" description="Disordered" evidence="3">
    <location>
        <begin position="132"/>
        <end position="157"/>
    </location>
</feature>
<feature type="region of interest" description="Disordered" evidence="3">
    <location>
        <begin position="173"/>
        <end position="194"/>
    </location>
</feature>
<feature type="region of interest" description="Disordered" evidence="3">
    <location>
        <begin position="271"/>
        <end position="581"/>
    </location>
</feature>
<feature type="compositionally biased region" description="Polar residues" evidence="3">
    <location>
        <begin position="138"/>
        <end position="157"/>
    </location>
</feature>
<feature type="compositionally biased region" description="Polar residues" evidence="3">
    <location>
        <begin position="174"/>
        <end position="194"/>
    </location>
</feature>
<feature type="compositionally biased region" description="Basic and acidic residues" evidence="3">
    <location>
        <begin position="291"/>
        <end position="310"/>
    </location>
</feature>
<feature type="compositionally biased region" description="Polar residues" evidence="3">
    <location>
        <begin position="324"/>
        <end position="333"/>
    </location>
</feature>
<feature type="compositionally biased region" description="Basic and acidic residues" evidence="3">
    <location>
        <begin position="334"/>
        <end position="344"/>
    </location>
</feature>
<feature type="compositionally biased region" description="Polar residues" evidence="3">
    <location>
        <begin position="366"/>
        <end position="396"/>
    </location>
</feature>
<feature type="compositionally biased region" description="Basic and acidic residues" evidence="3">
    <location>
        <begin position="412"/>
        <end position="425"/>
    </location>
</feature>
<feature type="compositionally biased region" description="Basic and acidic residues" evidence="3">
    <location>
        <begin position="455"/>
        <end position="464"/>
    </location>
</feature>
<feature type="compositionally biased region" description="Polar residues" evidence="3">
    <location>
        <begin position="481"/>
        <end position="497"/>
    </location>
</feature>
<feature type="compositionally biased region" description="Polar residues" evidence="3">
    <location>
        <begin position="505"/>
        <end position="529"/>
    </location>
</feature>
<feature type="compositionally biased region" description="Basic and acidic residues" evidence="3">
    <location>
        <begin position="530"/>
        <end position="545"/>
    </location>
</feature>
<feature type="compositionally biased region" description="Basic and acidic residues" evidence="3">
    <location>
        <begin position="558"/>
        <end position="581"/>
    </location>
</feature>
<sequence>MKSIILFVLSLLLILEKQAAVMGQKGGSKGQSPSGSSQFPHGQKGQHYFGQKDQQHTKSKGSFSIQHTYHVDVNDHDRTRESQQYDLNALHKTRKSKQHLGGSQELLNYKQEGRDHDKSKGHFHMIVIHHKGGKAHRGTQNPSQDQGNSPSGRGISSQYSNTEKRLWVHGLSKEQASASGAQKGRTQGRSQSSYVLQTEELVANKQRETQNSHQNKGHYQNVVEVREKHSSKLQTSLRPAYQDRLQHGPKDIFTTQGELLVYDKNQHQTKNLNQDQEHGRKAHKISYQSSHTEERQLNHGEKSVQKDISKGRISIQTEEKIHGKSQNQVTIHSQDQEHGHKENKMSYQSSSTEERHLNCGEKGIQKSVSKGSISIQTEEQIHGKSQNQVRIPSQAQEYGHKENKISYQSSSTEERRLNSGEKDIQKGVSKGSISIQTEEKIHGKSQDQVTIPSQDQEHGHKENKMSYQSSSTEERRLNYGGKNTQKDVSQSSISFQTEKLVEGKSQIQTPNPNQDQWSGQNAKGKSGQSADREQDLLSHEQKGRYQQESSAARNIVITEHEVARDDHLTQQYNEDRNPIST</sequence>
<accession>P0C7A4</accession>
<accession>A4K2V6</accession>
<accession>Q5U7N2</accession>
<accession>Q6X2M4</accession>
<reference key="1">
    <citation type="journal article" date="2007" name="Genome Res.">
        <title>Comparative sequence analyses reveal rapid and divergent evolutionary changes of the WFDC locus in the primate lineage.</title>
        <authorList>
            <consortium name="NISC comparative sequencing program"/>
            <person name="Hurle B."/>
            <person name="Swanson W."/>
            <person name="Green E.D."/>
        </authorList>
    </citation>
    <scope>NUCLEOTIDE SEQUENCE [GENOMIC DNA]</scope>
</reference>
<gene>
    <name type="primary">SEMG2</name>
</gene>
<comment type="function">
    <text evidence="1">Participates in the formation of a gel matrix (sperm coagulum) entrapping the accessory gland secretions and ejaculated spermatozoa.</text>
</comment>
<comment type="subunit">
    <text evidence="1">Interacts with SERPINA5.</text>
</comment>
<comment type="subcellular location">
    <subcellularLocation>
        <location evidence="1">Secreted</location>
    </subcellularLocation>
</comment>
<comment type="similarity">
    <text evidence="4">Belongs to the semenogelin family.</text>
</comment>